<protein>
    <recommendedName>
        <fullName evidence="5">UBX domain-containing protein 5</fullName>
    </recommendedName>
</protein>
<dbReference type="EMBL" id="BX284602">
    <property type="protein sequence ID" value="CAE17928.1"/>
    <property type="molecule type" value="Genomic_DNA"/>
</dbReference>
<dbReference type="RefSeq" id="NP_001022300.1">
    <property type="nucleotide sequence ID" value="NM_001027129.4"/>
</dbReference>
<dbReference type="SMR" id="Q7YWU9"/>
<dbReference type="FunCoup" id="Q7YWU9">
    <property type="interactions" value="3"/>
</dbReference>
<dbReference type="STRING" id="6239.T01E8.9.1"/>
<dbReference type="PaxDb" id="6239-T01E8.9"/>
<dbReference type="EnsemblMetazoa" id="T01E8.9.1">
    <property type="protein sequence ID" value="T01E8.9.1"/>
    <property type="gene ID" value="WBGene00011336"/>
</dbReference>
<dbReference type="GeneID" id="3565635"/>
<dbReference type="KEGG" id="cel:CELE_T01E8.9"/>
<dbReference type="UCSC" id="T01E8.9">
    <property type="organism name" value="c. elegans"/>
</dbReference>
<dbReference type="AGR" id="WB:WBGene00011336"/>
<dbReference type="CTD" id="3565635"/>
<dbReference type="WormBase" id="T01E8.9">
    <property type="protein sequence ID" value="CE34978"/>
    <property type="gene ID" value="WBGene00011336"/>
    <property type="gene designation" value="ubxn-5"/>
</dbReference>
<dbReference type="eggNOG" id="ENOG502TIX5">
    <property type="taxonomic scope" value="Eukaryota"/>
</dbReference>
<dbReference type="HOGENOM" id="CLU_1541505_0_0_1"/>
<dbReference type="InParanoid" id="Q7YWU9"/>
<dbReference type="OMA" id="PRAEIHC"/>
<dbReference type="OrthoDB" id="5868549at2759"/>
<dbReference type="PRO" id="PR:Q7YWU9"/>
<dbReference type="Proteomes" id="UP000001940">
    <property type="component" value="Chromosome II"/>
</dbReference>
<dbReference type="Bgee" id="WBGene00011336">
    <property type="expression patterns" value="Expressed in larva and 2 other cell types or tissues"/>
</dbReference>
<dbReference type="CDD" id="cd01767">
    <property type="entry name" value="UBX"/>
    <property type="match status" value="1"/>
</dbReference>
<dbReference type="Gene3D" id="3.10.20.90">
    <property type="entry name" value="Phosphatidylinositol 3-kinase Catalytic Subunit, Chain A, domain 1"/>
    <property type="match status" value="1"/>
</dbReference>
<dbReference type="InterPro" id="IPR029071">
    <property type="entry name" value="Ubiquitin-like_domsf"/>
</dbReference>
<dbReference type="InterPro" id="IPR001012">
    <property type="entry name" value="UBX_dom"/>
</dbReference>
<dbReference type="InterPro" id="IPR050730">
    <property type="entry name" value="UBX_domain-protein"/>
</dbReference>
<dbReference type="PANTHER" id="PTHR23322">
    <property type="entry name" value="FAS-ASSOCIATED PROTEIN"/>
    <property type="match status" value="1"/>
</dbReference>
<dbReference type="PANTHER" id="PTHR23322:SF93">
    <property type="entry name" value="UBX DOMAIN-CONTAINING PROTEIN 8"/>
    <property type="match status" value="1"/>
</dbReference>
<dbReference type="Pfam" id="PF00789">
    <property type="entry name" value="UBX"/>
    <property type="match status" value="1"/>
</dbReference>
<dbReference type="SUPFAM" id="SSF54236">
    <property type="entry name" value="Ubiquitin-like"/>
    <property type="match status" value="1"/>
</dbReference>
<dbReference type="PROSITE" id="PS50033">
    <property type="entry name" value="UBX"/>
    <property type="match status" value="1"/>
</dbReference>
<gene>
    <name evidence="7" type="primary">ubxn-5</name>
    <name evidence="7" type="ORF">T01E8.9</name>
</gene>
<name>UBXN5_CAEEL</name>
<evidence type="ECO:0000255" key="1"/>
<evidence type="ECO:0000255" key="2">
    <source>
        <dbReference type="PROSITE-ProRule" id="PRU00215"/>
    </source>
</evidence>
<evidence type="ECO:0000269" key="3">
    <source>
    </source>
</evidence>
<evidence type="ECO:0000269" key="4">
    <source>
    </source>
</evidence>
<evidence type="ECO:0000305" key="5"/>
<evidence type="ECO:0000312" key="6">
    <source>
        <dbReference type="Proteomes" id="UP000001940"/>
    </source>
</evidence>
<evidence type="ECO:0000312" key="7">
    <source>
        <dbReference type="WormBase" id="T01E8.9"/>
    </source>
</evidence>
<reference evidence="6" key="1">
    <citation type="journal article" date="1998" name="Science">
        <title>Genome sequence of the nematode C. elegans: a platform for investigating biology.</title>
        <authorList>
            <consortium name="The C. elegans sequencing consortium"/>
        </authorList>
    </citation>
    <scope>NUCLEOTIDE SEQUENCE [LARGE SCALE GENOMIC DNA]</scope>
    <source>
        <strain evidence="6">Bristol N2</strain>
    </source>
</reference>
<reference evidence="5" key="2">
    <citation type="journal article" date="2007" name="Biochem. Biophys. Res. Commun.">
        <title>Differential expression pattern of UBX family genes in Caenorhabditis elegans.</title>
        <authorList>
            <person name="Yamauchi S."/>
            <person name="Sasagawa Y."/>
            <person name="Ogura T."/>
            <person name="Yamanaka K."/>
        </authorList>
    </citation>
    <scope>TISSUE SPECIFICITY</scope>
    <scope>DEVELOPMENTAL STAGE</scope>
</reference>
<reference evidence="5" key="3">
    <citation type="journal article" date="2009" name="Biochem. Biophys. Res. Commun.">
        <title>ATX-3, CDC-48 and UBXN-5: a new trimolecular complex in Caenorhabditis elegans.</title>
        <authorList>
            <person name="Rodrigues A.J."/>
            <person name="Neves-Carvalho A."/>
            <person name="Ferro A."/>
            <person name="Rokka A."/>
            <person name="Corthals G."/>
            <person name="Logarinho E."/>
            <person name="Maciel P."/>
        </authorList>
    </citation>
    <scope>FUNCTION</scope>
    <scope>IDENTIFICATION IN A COMPLEX WITH CDC-48.1 AND ATX-3</scope>
    <scope>INTERACTION WITH ATX-3; CDC-48.1 AND CDC-48.2</scope>
</reference>
<feature type="chain" id="PRO_0000444376" description="UBX domain-containing protein 5">
    <location>
        <begin position="1"/>
        <end position="174"/>
    </location>
</feature>
<feature type="domain" description="UBX" evidence="2">
    <location>
        <begin position="74"/>
        <end position="120"/>
    </location>
</feature>
<feature type="coiled-coil region" evidence="1">
    <location>
        <begin position="8"/>
        <end position="58"/>
    </location>
</feature>
<comment type="function">
    <text evidence="4">Probably acts as an adapter for ATPase cdc-48.1 and/or cdc-48.2, conferring substrate specificity. Unlike other UBX domain-containing protein does not bind 'Lys-48'-polyubiquitinated chain.</text>
</comment>
<comment type="subunit">
    <text evidence="4">Forms a complex composed of deubiquitinating enzyme atx-3, adapter ubxn-5 and cdc-48.1. Interacts with atx-3 (via C-terminus). Interacts with cdc-48.1 (via N-terminus) and cdc-48.2.</text>
</comment>
<comment type="tissue specificity">
    <text evidence="3">Specifically expressed in the germline.</text>
</comment>
<comment type="developmental stage">
    <text evidence="3">Expressed at L4 larval stage and to a lesser extent in adults.</text>
</comment>
<sequence length="174" mass="20128">MPTNNHVQKEKFAEDRALLSQQNKEYAESLAKDIAKKEEKDKIRFEAEQKELRKKTIQDYREKLKGTVSQGPLRLLVRYPNGSRLILSFSPSQPMTSLFDAIILNPACPDYFSVRSVYPRAEIHCYPAWYHTIFNAEFKDETEKGANNVAKETNEVKCLETIPNNSILYVNLIQ</sequence>
<keyword id="KW-0175">Coiled coil</keyword>
<keyword id="KW-1185">Reference proteome</keyword>
<accession>Q7YWU9</accession>
<proteinExistence type="evidence at protein level"/>
<organism evidence="6">
    <name type="scientific">Caenorhabditis elegans</name>
    <dbReference type="NCBI Taxonomy" id="6239"/>
    <lineage>
        <taxon>Eukaryota</taxon>
        <taxon>Metazoa</taxon>
        <taxon>Ecdysozoa</taxon>
        <taxon>Nematoda</taxon>
        <taxon>Chromadorea</taxon>
        <taxon>Rhabditida</taxon>
        <taxon>Rhabditina</taxon>
        <taxon>Rhabditomorpha</taxon>
        <taxon>Rhabditoidea</taxon>
        <taxon>Rhabditidae</taxon>
        <taxon>Peloderinae</taxon>
        <taxon>Caenorhabditis</taxon>
    </lineage>
</organism>